<protein>
    <recommendedName>
        <fullName>Membrane cofactor protein</fullName>
    </recommendedName>
    <cdAntigenName>CD46</cdAntigenName>
</protein>
<dbReference type="EMBL" id="U87919">
    <property type="protein sequence ID" value="AAB66819.1"/>
    <property type="molecule type" value="mRNA"/>
</dbReference>
<dbReference type="EMBL" id="AF025483">
    <property type="protein sequence ID" value="AAC39671.1"/>
    <property type="molecule type" value="mRNA"/>
</dbReference>
<dbReference type="SMR" id="O62685"/>
<dbReference type="GlyCosmos" id="O62685">
    <property type="glycosylation" value="3 sites, No reported glycans"/>
</dbReference>
<dbReference type="GO" id="GO:0009986">
    <property type="term" value="C:cell surface"/>
    <property type="evidence" value="ECO:0007669"/>
    <property type="project" value="InterPro"/>
</dbReference>
<dbReference type="GO" id="GO:0002079">
    <property type="term" value="C:inner acrosomal membrane"/>
    <property type="evidence" value="ECO:0007669"/>
    <property type="project" value="UniProtKB-SubCell"/>
</dbReference>
<dbReference type="GO" id="GO:0006958">
    <property type="term" value="P:complement activation, classical pathway"/>
    <property type="evidence" value="ECO:0007669"/>
    <property type="project" value="UniProtKB-KW"/>
</dbReference>
<dbReference type="GO" id="GO:0045087">
    <property type="term" value="P:innate immune response"/>
    <property type="evidence" value="ECO:0007669"/>
    <property type="project" value="UniProtKB-KW"/>
</dbReference>
<dbReference type="GO" id="GO:0007338">
    <property type="term" value="P:single fertilization"/>
    <property type="evidence" value="ECO:0007669"/>
    <property type="project" value="UniProtKB-KW"/>
</dbReference>
<dbReference type="CDD" id="cd00033">
    <property type="entry name" value="CCP"/>
    <property type="match status" value="4"/>
</dbReference>
<dbReference type="FunFam" id="2.10.70.10:FF:000014">
    <property type="entry name" value="Membrane cofactor protein"/>
    <property type="match status" value="1"/>
</dbReference>
<dbReference type="FunFam" id="2.10.70.10:FF:000042">
    <property type="entry name" value="Membrane cofactor protein"/>
    <property type="match status" value="1"/>
</dbReference>
<dbReference type="Gene3D" id="2.10.70.10">
    <property type="entry name" value="Complement Module, domain 1"/>
    <property type="match status" value="4"/>
</dbReference>
<dbReference type="InterPro" id="IPR017341">
    <property type="entry name" value="CD46"/>
</dbReference>
<dbReference type="InterPro" id="IPR050350">
    <property type="entry name" value="Compl-Cell_Adhes-Reg"/>
</dbReference>
<dbReference type="InterPro" id="IPR035976">
    <property type="entry name" value="Sushi/SCR/CCP_sf"/>
</dbReference>
<dbReference type="InterPro" id="IPR000436">
    <property type="entry name" value="Sushi_SCR_CCP_dom"/>
</dbReference>
<dbReference type="PANTHER" id="PTHR19325">
    <property type="entry name" value="COMPLEMENT COMPONENT-RELATED SUSHI DOMAIN-CONTAINING"/>
    <property type="match status" value="1"/>
</dbReference>
<dbReference type="PANTHER" id="PTHR19325:SF521">
    <property type="entry name" value="MEMBRANE COFACTOR PROTEIN"/>
    <property type="match status" value="1"/>
</dbReference>
<dbReference type="Pfam" id="PF00084">
    <property type="entry name" value="Sushi"/>
    <property type="match status" value="4"/>
</dbReference>
<dbReference type="PIRSF" id="PIRSF037971">
    <property type="entry name" value="TLX_CD46"/>
    <property type="match status" value="1"/>
</dbReference>
<dbReference type="SMART" id="SM00032">
    <property type="entry name" value="CCP"/>
    <property type="match status" value="4"/>
</dbReference>
<dbReference type="SUPFAM" id="SSF57535">
    <property type="entry name" value="Complement control module/SCR domain"/>
    <property type="match status" value="4"/>
</dbReference>
<dbReference type="PROSITE" id="PS50923">
    <property type="entry name" value="SUSHI"/>
    <property type="match status" value="4"/>
</dbReference>
<gene>
    <name type="primary">CD46</name>
    <name type="synonym">MCP</name>
</gene>
<name>MCP_SAISC</name>
<evidence type="ECO:0000250" key="1"/>
<evidence type="ECO:0000250" key="2">
    <source>
        <dbReference type="UniProtKB" id="P15529"/>
    </source>
</evidence>
<evidence type="ECO:0000255" key="3"/>
<evidence type="ECO:0000255" key="4">
    <source>
        <dbReference type="PROSITE-ProRule" id="PRU00302"/>
    </source>
</evidence>
<evidence type="ECO:0000269" key="5">
    <source>
    </source>
</evidence>
<evidence type="ECO:0000269" key="6">
    <source>
    </source>
</evidence>
<evidence type="ECO:0000303" key="7">
    <source>
    </source>
</evidence>
<proteinExistence type="evidence at protein level"/>
<comment type="function">
    <text evidence="1">Acts as a cofactor for complement factor I, a serine protease which protects autologous cells against complement-mediated injury by cleaving C3b and C4b deposited on host tissue. May be involved in the fusion of the spermatozoa with the oocyte during fertilization. Also acts as a costimulatory factor for T-cells which induces the differentiation of CD4+ into T-regulatory 1 cells. T-regulatory 1 cells suppress immune responses by secreting interleukin-10, and therefore are thought to prevent autoimmunity (By similarity).</text>
</comment>
<comment type="subunit">
    <text evidence="2">Interacts with C3b. Interacts with C4b. Interacts with moesin/MSN.</text>
</comment>
<comment type="subcellular location">
    <subcellularLocation>
        <location evidence="1">Cytoplasmic vesicle</location>
        <location evidence="1">Secretory vesicle</location>
        <location evidence="1">Acrosome inner membrane</location>
        <topology evidence="1">Single-pass type I membrane protein</topology>
    </subcellularLocation>
    <text evidence="1">Inner acrosomal membrane of spermatozoa.</text>
</comment>
<comment type="alternative products">
    <event type="alternative splicing"/>
    <isoform>
        <id>O62685-1</id>
        <name>1</name>
        <sequence type="displayed"/>
    </isoform>
    <isoform>
        <id>O62685-2</id>
        <name>2</name>
        <sequence type="described" ref="VSP_019048 VSP_019049"/>
    </isoform>
</comment>
<comment type="tissue specificity">
    <text evidence="5 6">Present in blood and sperm. Isoform 2, but not isoform 1, is present at the erythrocyte membrane (at protein level).</text>
</comment>
<comment type="domain">
    <text evidence="1">Sushi domains 3 and 4 are the most important for interaction with C3b and C4b.</text>
</comment>
<comment type="PTM">
    <text evidence="5">N-glycosylated. Probably less N-glycosylated in testis.</text>
</comment>
<accession>O62685</accession>
<accession>O19125</accession>
<organism>
    <name type="scientific">Saimiri sciureus</name>
    <name type="common">Common squirrel monkey</name>
    <dbReference type="NCBI Taxonomy" id="9521"/>
    <lineage>
        <taxon>Eukaryota</taxon>
        <taxon>Metazoa</taxon>
        <taxon>Chordata</taxon>
        <taxon>Craniata</taxon>
        <taxon>Vertebrata</taxon>
        <taxon>Euteleostomi</taxon>
        <taxon>Mammalia</taxon>
        <taxon>Eutheria</taxon>
        <taxon>Euarchontoglires</taxon>
        <taxon>Primates</taxon>
        <taxon>Haplorrhini</taxon>
        <taxon>Platyrrhini</taxon>
        <taxon>Cebidae</taxon>
        <taxon>Saimiriinae</taxon>
        <taxon>Saimiri</taxon>
    </lineage>
</organism>
<sequence>MAPPSRRECPFPSRRFPGLFLAALALLLSSRSDACGPPPTFVAMELTSRPKPYYKVGEQVEYDCKKGYHHFAPFLTHTVCDRNHTWLPISDAPCVKKVCHYIPNPAHGQAILANGTYSFGNQLHFICNDGYYLIGKAILYCELKGSDAVWSGRPPICQKILCKPPPTIKNGKHTFSEVDVFEYLDAVTYSCDPAPGPDPFSLVGESTIYCRDSLGWSGDPPECKVVKCRFPVIENGRQTAGFGIKFYYNAAVMFECYEGFHIIGSDTIVCNSNSTWDPPVPKCVK</sequence>
<keyword id="KW-0025">Alternative splicing</keyword>
<keyword id="KW-0180">Complement pathway</keyword>
<keyword id="KW-0968">Cytoplasmic vesicle</keyword>
<keyword id="KW-1015">Disulfide bond</keyword>
<keyword id="KW-0278">Fertilization</keyword>
<keyword id="KW-0325">Glycoprotein</keyword>
<keyword id="KW-0391">Immunity</keyword>
<keyword id="KW-0399">Innate immunity</keyword>
<keyword id="KW-0472">Membrane</keyword>
<keyword id="KW-0677">Repeat</keyword>
<keyword id="KW-0732">Signal</keyword>
<keyword id="KW-0768">Sushi</keyword>
<reference key="1">
    <citation type="journal article" date="1997" name="J. Virol.">
        <title>Artificial mutations and natural variations in the CD46 molecules from human and monkey cells define regions important for measles virus binding.</title>
        <authorList>
            <person name="Hsu E.C."/>
            <person name="Doerig R.E."/>
            <person name="Sarangi F."/>
            <person name="Marcil A."/>
            <person name="Iorio C."/>
            <person name="Richardson C.D."/>
        </authorList>
    </citation>
    <scope>NUCLEOTIDE SEQUENCE [MRNA] (ISOFORM 2)</scope>
    <scope>TISSUE SPECIFICITY</scope>
    <source>
        <tissue>Lymphocyte</tissue>
    </source>
</reference>
<reference key="2">
    <citation type="journal article" date="1998" name="J. Virol.">
        <title>A single amino acid change in the hemagglutinin protein of measles virus determines its ability to bind CD46 and reveals another receptor on marmoset B cells.</title>
        <authorList>
            <person name="Hsu E.C."/>
            <person name="Sarangi F."/>
            <person name="Iorio C."/>
            <person name="Sidhu M.S."/>
            <person name="Udem S.A."/>
            <person name="Dillehay D.L."/>
            <person name="Xu W."/>
            <person name="Rota P.A."/>
            <person name="Bellini W.J."/>
            <person name="Richardson C.D."/>
        </authorList>
    </citation>
    <scope>NUCLEOTIDE SEQUENCE [MRNA] OF 1-185 (ISOFORM 1)</scope>
    <source>
        <tissue>Lung</tissue>
    </source>
</reference>
<reference key="3">
    <citation type="journal article" date="2002" name="J. Immunol.">
        <title>Inhibiting measles virus infection but promoting reproduction: an explanation for splicing and tissue-specific expression of CD46.</title>
        <authorList>
            <person name="Riley R.C."/>
            <person name="Tannenbaum P.L."/>
            <person name="Abbott D.H."/>
            <person name="Atkinson J.P."/>
        </authorList>
    </citation>
    <scope>TISSUE SPECIFICITY</scope>
    <scope>GLYCOSYLATION</scope>
</reference>
<feature type="signal peptide" evidence="3">
    <location>
        <begin position="1"/>
        <end position="34"/>
    </location>
</feature>
<feature type="chain" id="PRO_0000238977" description="Membrane cofactor protein">
    <location>
        <begin position="35"/>
        <end position="285"/>
    </location>
</feature>
<feature type="domain" description="Sushi 1" evidence="4">
    <location>
        <begin position="35"/>
        <end position="96"/>
    </location>
</feature>
<feature type="domain" description="Sushi 2" evidence="4">
    <location>
        <begin position="97"/>
        <end position="159"/>
    </location>
</feature>
<feature type="domain" description="Sushi 3" evidence="4">
    <location>
        <begin position="160"/>
        <end position="225"/>
    </location>
</feature>
<feature type="domain" description="Sushi 4" evidence="4">
    <location>
        <begin position="226"/>
        <end position="285"/>
    </location>
</feature>
<feature type="glycosylation site" description="N-linked (GlcNAc...) asparagine" evidence="3">
    <location>
        <position position="114"/>
    </location>
</feature>
<feature type="glycosylation site" description="O-linked (GalNAc...) threonine" evidence="3">
    <location>
        <position position="167"/>
    </location>
</feature>
<feature type="glycosylation site" description="O-linked (GalNAc...) threonine" evidence="3">
    <location>
        <position position="207"/>
    </location>
</feature>
<feature type="disulfide bond" evidence="4">
    <location>
        <begin position="99"/>
        <end position="141"/>
    </location>
</feature>
<feature type="disulfide bond" evidence="4">
    <location>
        <begin position="127"/>
        <end position="157"/>
    </location>
</feature>
<feature type="disulfide bond" evidence="4">
    <location>
        <begin position="162"/>
        <end position="210"/>
    </location>
</feature>
<feature type="disulfide bond" evidence="4">
    <location>
        <begin position="191"/>
        <end position="223"/>
    </location>
</feature>
<feature type="disulfide bond" evidence="4">
    <location>
        <begin position="228"/>
        <end position="270"/>
    </location>
</feature>
<feature type="disulfide bond" evidence="4">
    <location>
        <begin position="256"/>
        <end position="283"/>
    </location>
</feature>
<feature type="splice variant" id="VSP_019048" description="In isoform 2." evidence="7">
    <original>D</original>
    <variation>E</variation>
    <location>
        <position position="33"/>
    </location>
</feature>
<feature type="splice variant" id="VSP_019049" description="In isoform 2." evidence="7">
    <location>
        <begin position="34"/>
        <end position="96"/>
    </location>
</feature>
<feature type="non-terminal residue">
    <location>
        <position position="285"/>
    </location>
</feature>